<dbReference type="EMBL" id="EF067920">
    <property type="protein sequence ID" value="ABK20670.1"/>
    <property type="molecule type" value="Genomic_DNA"/>
</dbReference>
<dbReference type="RefSeq" id="YP_874447.1">
    <property type="nucleotide sequence ID" value="NC_008588.1"/>
</dbReference>
<dbReference type="SMR" id="A0T0H2"/>
<dbReference type="STRING" id="556484.A0T0H2"/>
<dbReference type="GeneID" id="4524547"/>
<dbReference type="InParanoid" id="A0T0H2"/>
<dbReference type="Proteomes" id="UP000000759">
    <property type="component" value="Chloroplast"/>
</dbReference>
<dbReference type="GO" id="GO:0009507">
    <property type="term" value="C:chloroplast"/>
    <property type="evidence" value="ECO:0007669"/>
    <property type="project" value="UniProtKB-SubCell"/>
</dbReference>
<dbReference type="GO" id="GO:0015935">
    <property type="term" value="C:small ribosomal subunit"/>
    <property type="evidence" value="ECO:0007669"/>
    <property type="project" value="InterPro"/>
</dbReference>
<dbReference type="GO" id="GO:0019843">
    <property type="term" value="F:rRNA binding"/>
    <property type="evidence" value="ECO:0007669"/>
    <property type="project" value="UniProtKB-UniRule"/>
</dbReference>
<dbReference type="GO" id="GO:0003735">
    <property type="term" value="F:structural constituent of ribosome"/>
    <property type="evidence" value="ECO:0007669"/>
    <property type="project" value="InterPro"/>
</dbReference>
<dbReference type="GO" id="GO:0042274">
    <property type="term" value="P:ribosomal small subunit biogenesis"/>
    <property type="evidence" value="ECO:0007669"/>
    <property type="project" value="TreeGrafter"/>
</dbReference>
<dbReference type="GO" id="GO:0006412">
    <property type="term" value="P:translation"/>
    <property type="evidence" value="ECO:0007669"/>
    <property type="project" value="UniProtKB-UniRule"/>
</dbReference>
<dbReference type="CDD" id="cd00165">
    <property type="entry name" value="S4"/>
    <property type="match status" value="1"/>
</dbReference>
<dbReference type="FunFam" id="3.10.290.10:FF:000001">
    <property type="entry name" value="30S ribosomal protein S4"/>
    <property type="match status" value="1"/>
</dbReference>
<dbReference type="FunFam" id="1.10.1050.10:FF:000002">
    <property type="entry name" value="30S ribosomal protein S4, chloroplastic"/>
    <property type="match status" value="1"/>
</dbReference>
<dbReference type="Gene3D" id="1.10.1050.10">
    <property type="entry name" value="Ribosomal Protein S4 Delta 41, Chain A, domain 1"/>
    <property type="match status" value="1"/>
</dbReference>
<dbReference type="Gene3D" id="3.10.290.10">
    <property type="entry name" value="RNA-binding S4 domain"/>
    <property type="match status" value="1"/>
</dbReference>
<dbReference type="HAMAP" id="MF_01306_B">
    <property type="entry name" value="Ribosomal_uS4_B"/>
    <property type="match status" value="1"/>
</dbReference>
<dbReference type="InterPro" id="IPR022801">
    <property type="entry name" value="Ribosomal_uS4"/>
</dbReference>
<dbReference type="InterPro" id="IPR005709">
    <property type="entry name" value="Ribosomal_uS4_bac-type"/>
</dbReference>
<dbReference type="InterPro" id="IPR018079">
    <property type="entry name" value="Ribosomal_uS4_CS"/>
</dbReference>
<dbReference type="InterPro" id="IPR001912">
    <property type="entry name" value="Ribosomal_uS4_N"/>
</dbReference>
<dbReference type="InterPro" id="IPR002942">
    <property type="entry name" value="S4_RNA-bd"/>
</dbReference>
<dbReference type="InterPro" id="IPR036986">
    <property type="entry name" value="S4_RNA-bd_sf"/>
</dbReference>
<dbReference type="NCBIfam" id="NF003717">
    <property type="entry name" value="PRK05327.1"/>
    <property type="match status" value="1"/>
</dbReference>
<dbReference type="NCBIfam" id="TIGR01017">
    <property type="entry name" value="rpsD_bact"/>
    <property type="match status" value="1"/>
</dbReference>
<dbReference type="PANTHER" id="PTHR11831">
    <property type="entry name" value="30S 40S RIBOSOMAL PROTEIN"/>
    <property type="match status" value="1"/>
</dbReference>
<dbReference type="PANTHER" id="PTHR11831:SF4">
    <property type="entry name" value="SMALL RIBOSOMAL SUBUNIT PROTEIN US4M"/>
    <property type="match status" value="1"/>
</dbReference>
<dbReference type="Pfam" id="PF00163">
    <property type="entry name" value="Ribosomal_S4"/>
    <property type="match status" value="1"/>
</dbReference>
<dbReference type="Pfam" id="PF01479">
    <property type="entry name" value="S4"/>
    <property type="match status" value="1"/>
</dbReference>
<dbReference type="SMART" id="SM01390">
    <property type="entry name" value="Ribosomal_S4"/>
    <property type="match status" value="1"/>
</dbReference>
<dbReference type="SMART" id="SM00363">
    <property type="entry name" value="S4"/>
    <property type="match status" value="1"/>
</dbReference>
<dbReference type="SUPFAM" id="SSF55174">
    <property type="entry name" value="Alpha-L RNA-binding motif"/>
    <property type="match status" value="1"/>
</dbReference>
<dbReference type="PROSITE" id="PS00632">
    <property type="entry name" value="RIBOSOMAL_S4"/>
    <property type="match status" value="1"/>
</dbReference>
<dbReference type="PROSITE" id="PS50889">
    <property type="entry name" value="S4"/>
    <property type="match status" value="1"/>
</dbReference>
<organism>
    <name type="scientific">Phaeodactylum tricornutum (strain CCAP 1055/1)</name>
    <dbReference type="NCBI Taxonomy" id="556484"/>
    <lineage>
        <taxon>Eukaryota</taxon>
        <taxon>Sar</taxon>
        <taxon>Stramenopiles</taxon>
        <taxon>Ochrophyta</taxon>
        <taxon>Bacillariophyta</taxon>
        <taxon>Bacillariophyceae</taxon>
        <taxon>Bacillariophycidae</taxon>
        <taxon>Naviculales</taxon>
        <taxon>Phaeodactylaceae</taxon>
        <taxon>Phaeodactylum</taxon>
    </lineage>
</organism>
<feature type="chain" id="PRO_0000277024" description="Small ribosomal subunit protein uS4c">
    <location>
        <begin position="1"/>
        <end position="203"/>
    </location>
</feature>
<feature type="domain" description="S4 RNA-binding">
    <location>
        <begin position="92"/>
        <end position="164"/>
    </location>
</feature>
<feature type="region of interest" description="Disordered" evidence="2">
    <location>
        <begin position="17"/>
        <end position="39"/>
    </location>
</feature>
<gene>
    <name type="primary">rps4</name>
</gene>
<sequence>MSRYRGPKLKISRRLGTLPGLTTKKSNKLNRPGKDGNTDIGKKLTEYGVRLEEKQKLKFNYGLTEKQLFRYVKEARRRQGVTGLILLQLLEMRLDTLCFTLGFAKSLAQARQLVNHGHITINKKVVSIPSFQCRLNDIISIKEKSSSKTLVETNIKNNQVREIPTHLRFDTVKLEAIVLDYCDRNDVSLQLDELLVIEHYSRR</sequence>
<comment type="function">
    <text evidence="1">One of the primary rRNA binding proteins, it binds directly to 16S rRNA where it nucleates assembly of the body of the 30S subunit.</text>
</comment>
<comment type="function">
    <text evidence="1">With S5 and S12 plays an important role in translational accuracy.</text>
</comment>
<comment type="subunit">
    <text evidence="1">Part of the 30S ribosomal subunit. Contacts protein S5. The interaction surface between S4 and S5 is involved in control of translational fidelity (By similarity).</text>
</comment>
<comment type="subcellular location">
    <subcellularLocation>
        <location>Plastid</location>
        <location>Chloroplast</location>
    </subcellularLocation>
</comment>
<comment type="similarity">
    <text evidence="3">Belongs to the universal ribosomal protein uS4 family.</text>
</comment>
<reference key="1">
    <citation type="journal article" date="2007" name="Mol. Genet. Genomics">
        <title>Chloroplast genomes of the diatoms Phaeodactylum tricornutum and Thalassiosira pseudonana: comparison with other plastid genomes of the red lineage.</title>
        <authorList>
            <person name="Oudot-Le Secq M.-P."/>
            <person name="Grimwood J."/>
            <person name="Shapiro H."/>
            <person name="Armbrust E.V."/>
            <person name="Bowler C."/>
            <person name="Green B.R."/>
        </authorList>
    </citation>
    <scope>NUCLEOTIDE SEQUENCE [LARGE SCALE GENOMIC DNA]</scope>
    <source>
        <strain>CCAP 1055/1</strain>
    </source>
</reference>
<proteinExistence type="inferred from homology"/>
<name>RR4_PHATC</name>
<geneLocation type="chloroplast"/>
<keyword id="KW-0150">Chloroplast</keyword>
<keyword id="KW-0934">Plastid</keyword>
<keyword id="KW-1185">Reference proteome</keyword>
<keyword id="KW-0687">Ribonucleoprotein</keyword>
<keyword id="KW-0689">Ribosomal protein</keyword>
<keyword id="KW-0694">RNA-binding</keyword>
<keyword id="KW-0699">rRNA-binding</keyword>
<evidence type="ECO:0000250" key="1"/>
<evidence type="ECO:0000256" key="2">
    <source>
        <dbReference type="SAM" id="MobiDB-lite"/>
    </source>
</evidence>
<evidence type="ECO:0000305" key="3"/>
<protein>
    <recommendedName>
        <fullName evidence="3">Small ribosomal subunit protein uS4c</fullName>
    </recommendedName>
    <alternativeName>
        <fullName>30S ribosomal protein S4, chloroplastic</fullName>
    </alternativeName>
</protein>
<accession>A0T0H2</accession>